<reference key="1">
    <citation type="journal article" date="2001" name="Proc. Natl. Acad. Sci. U.S.A.">
        <title>Analysis of the chromosome sequence of the legume symbiont Sinorhizobium meliloti strain 1021.</title>
        <authorList>
            <person name="Capela D."/>
            <person name="Barloy-Hubler F."/>
            <person name="Gouzy J."/>
            <person name="Bothe G."/>
            <person name="Ampe F."/>
            <person name="Batut J."/>
            <person name="Boistard P."/>
            <person name="Becker A."/>
            <person name="Boutry M."/>
            <person name="Cadieu E."/>
            <person name="Dreano S."/>
            <person name="Gloux S."/>
            <person name="Godrie T."/>
            <person name="Goffeau A."/>
            <person name="Kahn D."/>
            <person name="Kiss E."/>
            <person name="Lelaure V."/>
            <person name="Masuy D."/>
            <person name="Pohl T."/>
            <person name="Portetelle D."/>
            <person name="Puehler A."/>
            <person name="Purnelle B."/>
            <person name="Ramsperger U."/>
            <person name="Renard C."/>
            <person name="Thebault P."/>
            <person name="Vandenbol M."/>
            <person name="Weidner S."/>
            <person name="Galibert F."/>
        </authorList>
    </citation>
    <scope>NUCLEOTIDE SEQUENCE [LARGE SCALE GENOMIC DNA]</scope>
    <source>
        <strain>1021</strain>
    </source>
</reference>
<reference key="2">
    <citation type="journal article" date="2001" name="Science">
        <title>The composite genome of the legume symbiont Sinorhizobium meliloti.</title>
        <authorList>
            <person name="Galibert F."/>
            <person name="Finan T.M."/>
            <person name="Long S.R."/>
            <person name="Puehler A."/>
            <person name="Abola P."/>
            <person name="Ampe F."/>
            <person name="Barloy-Hubler F."/>
            <person name="Barnett M.J."/>
            <person name="Becker A."/>
            <person name="Boistard P."/>
            <person name="Bothe G."/>
            <person name="Boutry M."/>
            <person name="Bowser L."/>
            <person name="Buhrmester J."/>
            <person name="Cadieu E."/>
            <person name="Capela D."/>
            <person name="Chain P."/>
            <person name="Cowie A."/>
            <person name="Davis R.W."/>
            <person name="Dreano S."/>
            <person name="Federspiel N.A."/>
            <person name="Fisher R.F."/>
            <person name="Gloux S."/>
            <person name="Godrie T."/>
            <person name="Goffeau A."/>
            <person name="Golding B."/>
            <person name="Gouzy J."/>
            <person name="Gurjal M."/>
            <person name="Hernandez-Lucas I."/>
            <person name="Hong A."/>
            <person name="Huizar L."/>
            <person name="Hyman R.W."/>
            <person name="Jones T."/>
            <person name="Kahn D."/>
            <person name="Kahn M.L."/>
            <person name="Kalman S."/>
            <person name="Keating D.H."/>
            <person name="Kiss E."/>
            <person name="Komp C."/>
            <person name="Lelaure V."/>
            <person name="Masuy D."/>
            <person name="Palm C."/>
            <person name="Peck M.C."/>
            <person name="Pohl T.M."/>
            <person name="Portetelle D."/>
            <person name="Purnelle B."/>
            <person name="Ramsperger U."/>
            <person name="Surzycki R."/>
            <person name="Thebault P."/>
            <person name="Vandenbol M."/>
            <person name="Vorhoelter F.J."/>
            <person name="Weidner S."/>
            <person name="Wells D.H."/>
            <person name="Wong K."/>
            <person name="Yeh K.-C."/>
            <person name="Batut J."/>
        </authorList>
    </citation>
    <scope>NUCLEOTIDE SEQUENCE [LARGE SCALE GENOMIC DNA]</scope>
    <source>
        <strain>1021</strain>
    </source>
</reference>
<gene>
    <name evidence="1" type="primary">hmuV</name>
    <name type="ordered locus">R02431</name>
    <name type="ORF">SMc01510</name>
</gene>
<dbReference type="EC" id="7.6.2.-" evidence="1"/>
<dbReference type="EMBL" id="AL591688">
    <property type="protein sequence ID" value="CAC47010.1"/>
    <property type="molecule type" value="Genomic_DNA"/>
</dbReference>
<dbReference type="RefSeq" id="NP_386537.1">
    <property type="nucleotide sequence ID" value="NC_003047.1"/>
</dbReference>
<dbReference type="RefSeq" id="WP_010969935.1">
    <property type="nucleotide sequence ID" value="NC_003047.1"/>
</dbReference>
<dbReference type="SMR" id="Q92N13"/>
<dbReference type="EnsemblBacteria" id="CAC47010">
    <property type="protein sequence ID" value="CAC47010"/>
    <property type="gene ID" value="SMc01510"/>
</dbReference>
<dbReference type="KEGG" id="sme:SMc01510"/>
<dbReference type="PATRIC" id="fig|266834.11.peg.3918"/>
<dbReference type="eggNOG" id="COG4559">
    <property type="taxonomic scope" value="Bacteria"/>
</dbReference>
<dbReference type="HOGENOM" id="CLU_000604_1_11_5"/>
<dbReference type="OrthoDB" id="9810077at2"/>
<dbReference type="Proteomes" id="UP000001976">
    <property type="component" value="Chromosome"/>
</dbReference>
<dbReference type="GO" id="GO:0005886">
    <property type="term" value="C:plasma membrane"/>
    <property type="evidence" value="ECO:0007669"/>
    <property type="project" value="UniProtKB-SubCell"/>
</dbReference>
<dbReference type="GO" id="GO:0005524">
    <property type="term" value="F:ATP binding"/>
    <property type="evidence" value="ECO:0007669"/>
    <property type="project" value="UniProtKB-KW"/>
</dbReference>
<dbReference type="GO" id="GO:0016887">
    <property type="term" value="F:ATP hydrolysis activity"/>
    <property type="evidence" value="ECO:0007669"/>
    <property type="project" value="InterPro"/>
</dbReference>
<dbReference type="CDD" id="cd03214">
    <property type="entry name" value="ABC_Iron-Siderophores_B12_Hemin"/>
    <property type="match status" value="1"/>
</dbReference>
<dbReference type="Gene3D" id="3.40.50.300">
    <property type="entry name" value="P-loop containing nucleotide triphosphate hydrolases"/>
    <property type="match status" value="1"/>
</dbReference>
<dbReference type="InterPro" id="IPR003593">
    <property type="entry name" value="AAA+_ATPase"/>
</dbReference>
<dbReference type="InterPro" id="IPR003439">
    <property type="entry name" value="ABC_transporter-like_ATP-bd"/>
</dbReference>
<dbReference type="InterPro" id="IPR017871">
    <property type="entry name" value="ABC_transporter-like_CS"/>
</dbReference>
<dbReference type="InterPro" id="IPR027417">
    <property type="entry name" value="P-loop_NTPase"/>
</dbReference>
<dbReference type="NCBIfam" id="NF010068">
    <property type="entry name" value="PRK13548.1"/>
    <property type="match status" value="1"/>
</dbReference>
<dbReference type="PANTHER" id="PTHR42794">
    <property type="entry name" value="HEMIN IMPORT ATP-BINDING PROTEIN HMUV"/>
    <property type="match status" value="1"/>
</dbReference>
<dbReference type="PANTHER" id="PTHR42794:SF1">
    <property type="entry name" value="HEMIN IMPORT ATP-BINDING PROTEIN HMUV"/>
    <property type="match status" value="1"/>
</dbReference>
<dbReference type="Pfam" id="PF00005">
    <property type="entry name" value="ABC_tran"/>
    <property type="match status" value="1"/>
</dbReference>
<dbReference type="SMART" id="SM00382">
    <property type="entry name" value="AAA"/>
    <property type="match status" value="1"/>
</dbReference>
<dbReference type="SUPFAM" id="SSF52540">
    <property type="entry name" value="P-loop containing nucleoside triphosphate hydrolases"/>
    <property type="match status" value="1"/>
</dbReference>
<dbReference type="PROSITE" id="PS00211">
    <property type="entry name" value="ABC_TRANSPORTER_1"/>
    <property type="match status" value="1"/>
</dbReference>
<dbReference type="PROSITE" id="PS50893">
    <property type="entry name" value="ABC_TRANSPORTER_2"/>
    <property type="match status" value="1"/>
</dbReference>
<dbReference type="PROSITE" id="PS51261">
    <property type="entry name" value="HMUV"/>
    <property type="match status" value="1"/>
</dbReference>
<evidence type="ECO:0000255" key="1">
    <source>
        <dbReference type="HAMAP-Rule" id="MF_01718"/>
    </source>
</evidence>
<sequence length="262" mass="27856">MIRASDISVRLAGRQVLHGISLDAAPGAMTAIVGPNGSGKTTTLKAISGELTPSAGKVTINGRDIASLKPWELALKRGVLPQSTVISFPFTVREIVRLGLMANGGEASAHGRIADQALEAVDLAGFSGRFYQELSGGEQQRVQLARVLCQISAPVAAGEPRYLLLDEPVSSLDIRHQLTIMRLARQFCADGGGVVAVMHDLNLTSMFADQIVMMKAGRIRARGAPKDVLTDETMEAVFGCRMRVSVAPAHDIPFVLPQSATM</sequence>
<keyword id="KW-0067">ATP-binding</keyword>
<keyword id="KW-0997">Cell inner membrane</keyword>
<keyword id="KW-1003">Cell membrane</keyword>
<keyword id="KW-0472">Membrane</keyword>
<keyword id="KW-0547">Nucleotide-binding</keyword>
<keyword id="KW-1185">Reference proteome</keyword>
<keyword id="KW-1278">Translocase</keyword>
<keyword id="KW-0813">Transport</keyword>
<accession>Q92N13</accession>
<organism>
    <name type="scientific">Rhizobium meliloti (strain 1021)</name>
    <name type="common">Ensifer meliloti</name>
    <name type="synonym">Sinorhizobium meliloti</name>
    <dbReference type="NCBI Taxonomy" id="266834"/>
    <lineage>
        <taxon>Bacteria</taxon>
        <taxon>Pseudomonadati</taxon>
        <taxon>Pseudomonadota</taxon>
        <taxon>Alphaproteobacteria</taxon>
        <taxon>Hyphomicrobiales</taxon>
        <taxon>Rhizobiaceae</taxon>
        <taxon>Sinorhizobium/Ensifer group</taxon>
        <taxon>Sinorhizobium</taxon>
    </lineage>
</organism>
<proteinExistence type="inferred from homology"/>
<comment type="function">
    <text evidence="1">Part of the ABC transporter complex HmuTUV involved in hemin import. Responsible for energy coupling to the transport system.</text>
</comment>
<comment type="subunit">
    <text evidence="1">The complex is composed of two ATP-binding proteins (HmuV), two transmembrane proteins (HmuU) and a solute-binding protein (HmuT).</text>
</comment>
<comment type="subcellular location">
    <subcellularLocation>
        <location evidence="1">Cell inner membrane</location>
        <topology evidence="1">Peripheral membrane protein</topology>
    </subcellularLocation>
</comment>
<comment type="similarity">
    <text evidence="1">Belongs to the ABC transporter superfamily. Heme (hemin) importer (TC 3.A.1.14.5) family.</text>
</comment>
<protein>
    <recommendedName>
        <fullName evidence="1">Hemin import ATP-binding protein HmuV</fullName>
        <ecNumber evidence="1">7.6.2.-</ecNumber>
    </recommendedName>
</protein>
<name>HMUV_RHIME</name>
<feature type="chain" id="PRO_0000269619" description="Hemin import ATP-binding protein HmuV">
    <location>
        <begin position="1"/>
        <end position="262"/>
    </location>
</feature>
<feature type="domain" description="ABC transporter" evidence="1">
    <location>
        <begin position="2"/>
        <end position="241"/>
    </location>
</feature>
<feature type="binding site" evidence="1">
    <location>
        <begin position="34"/>
        <end position="41"/>
    </location>
    <ligand>
        <name>ATP</name>
        <dbReference type="ChEBI" id="CHEBI:30616"/>
    </ligand>
</feature>